<dbReference type="EC" id="3.4.24.38"/>
<dbReference type="EMBL" id="M94265">
    <property type="protein sequence ID" value="AAA33094.1"/>
    <property type="molecule type" value="mRNA"/>
</dbReference>
<dbReference type="EMBL" id="D10542">
    <property type="protein sequence ID" value="BAA01400.1"/>
    <property type="molecule type" value="mRNA"/>
</dbReference>
<dbReference type="PIR" id="A45287">
    <property type="entry name" value="A45287"/>
</dbReference>
<dbReference type="MEROPS" id="M11.001"/>
<dbReference type="PaxDb" id="3055-EDO96296"/>
<dbReference type="BRENDA" id="3.4.24.38">
    <property type="organism ID" value="1318"/>
</dbReference>
<dbReference type="GO" id="GO:0031012">
    <property type="term" value="C:extracellular matrix"/>
    <property type="evidence" value="ECO:0007669"/>
    <property type="project" value="InterPro"/>
</dbReference>
<dbReference type="GO" id="GO:0005576">
    <property type="term" value="C:extracellular region"/>
    <property type="evidence" value="ECO:0007669"/>
    <property type="project" value="UniProtKB-KW"/>
</dbReference>
<dbReference type="GO" id="GO:0004222">
    <property type="term" value="F:metalloendopeptidase activity"/>
    <property type="evidence" value="ECO:0007669"/>
    <property type="project" value="InterPro"/>
</dbReference>
<dbReference type="GO" id="GO:0008270">
    <property type="term" value="F:zinc ion binding"/>
    <property type="evidence" value="ECO:0007669"/>
    <property type="project" value="InterPro"/>
</dbReference>
<dbReference type="GO" id="GO:0071555">
    <property type="term" value="P:cell wall organization"/>
    <property type="evidence" value="ECO:0007669"/>
    <property type="project" value="UniProtKB-KW"/>
</dbReference>
<dbReference type="GO" id="GO:0006508">
    <property type="term" value="P:proteolysis"/>
    <property type="evidence" value="ECO:0007669"/>
    <property type="project" value="UniProtKB-KW"/>
</dbReference>
<dbReference type="InterPro" id="IPR021158">
    <property type="entry name" value="Pept_M10A_Zn_BS"/>
</dbReference>
<dbReference type="InterPro" id="IPR008752">
    <property type="entry name" value="Peptidase_M11"/>
</dbReference>
<dbReference type="InterPro" id="IPR016517">
    <property type="entry name" value="Peptidase_M11_autolysin"/>
</dbReference>
<dbReference type="Pfam" id="PF05548">
    <property type="entry name" value="Peptidase_M11"/>
    <property type="match status" value="1"/>
</dbReference>
<dbReference type="PIRSF" id="PIRSF007635">
    <property type="entry name" value="Autolysin"/>
    <property type="match status" value="1"/>
</dbReference>
<dbReference type="PROSITE" id="PS00546">
    <property type="entry name" value="CYSTEINE_SWITCH"/>
    <property type="match status" value="1"/>
</dbReference>
<accession>P31178</accession>
<feature type="signal peptide" evidence="2">
    <location>
        <begin position="1"/>
        <end position="28"/>
    </location>
</feature>
<feature type="propeptide" id="PRO_0000028870" description="Activation peptide" evidence="4">
    <location>
        <begin position="29"/>
        <end position="183"/>
    </location>
</feature>
<feature type="chain" id="PRO_0000028871" description="Autolysin">
    <location>
        <begin position="184"/>
        <end position="638"/>
    </location>
</feature>
<feature type="region of interest" description="Disordered" evidence="3">
    <location>
        <begin position="269"/>
        <end position="292"/>
    </location>
</feature>
<feature type="short sequence motif" description="Cysteine switch" evidence="1">
    <location>
        <begin position="95"/>
        <end position="102"/>
    </location>
</feature>
<feature type="compositionally biased region" description="Pro residues" evidence="3">
    <location>
        <begin position="270"/>
        <end position="284"/>
    </location>
</feature>
<feature type="active site" evidence="1">
    <location>
        <position position="397"/>
    </location>
</feature>
<feature type="binding site" description="in inhibited form" evidence="1">
    <location>
        <position position="97"/>
    </location>
    <ligand>
        <name>Zn(2+)</name>
        <dbReference type="ChEBI" id="CHEBI:29105"/>
        <note>catalytic</note>
    </ligand>
</feature>
<feature type="binding site" evidence="1">
    <location>
        <position position="396"/>
    </location>
    <ligand>
        <name>Zn(2+)</name>
        <dbReference type="ChEBI" id="CHEBI:29105"/>
        <note>catalytic</note>
    </ligand>
</feature>
<feature type="binding site" evidence="1">
    <location>
        <position position="400"/>
    </location>
    <ligand>
        <name>Zn(2+)</name>
        <dbReference type="ChEBI" id="CHEBI:29105"/>
        <note>catalytic</note>
    </ligand>
</feature>
<feature type="binding site" evidence="1">
    <location>
        <position position="406"/>
    </location>
    <ligand>
        <name>Zn(2+)</name>
        <dbReference type="ChEBI" id="CHEBI:29105"/>
        <note>catalytic</note>
    </ligand>
</feature>
<feature type="glycosylation site" description="N-linked (GlcNAc...) asparagine" evidence="2">
    <location>
        <position position="30"/>
    </location>
</feature>
<feature type="glycosylation site" description="N-linked (GlcNAc...) asparagine" evidence="2">
    <location>
        <position position="126"/>
    </location>
</feature>
<feature type="glycosylation site" description="N-linked (GlcNAc...) asparagine" evidence="2">
    <location>
        <position position="296"/>
    </location>
</feature>
<feature type="glycosylation site" description="N-linked (GlcNAc...) asparagine" evidence="2">
    <location>
        <position position="458"/>
    </location>
</feature>
<feature type="glycosylation site" description="N-linked (GlcNAc...) asparagine" evidence="2">
    <location>
        <position position="465"/>
    </location>
</feature>
<feature type="glycosylation site" description="N-linked (GlcNAc...) asparagine" evidence="2">
    <location>
        <position position="470"/>
    </location>
</feature>
<feature type="glycosylation site" description="N-linked (GlcNAc...) asparagine" evidence="2">
    <location>
        <position position="523"/>
    </location>
</feature>
<keyword id="KW-0134">Cell wall</keyword>
<keyword id="KW-0961">Cell wall biogenesis/degradation</keyword>
<keyword id="KW-0903">Direct protein sequencing</keyword>
<keyword id="KW-0325">Glycoprotein</keyword>
<keyword id="KW-0378">Hydrolase</keyword>
<keyword id="KW-0479">Metal-binding</keyword>
<keyword id="KW-0482">Metalloprotease</keyword>
<keyword id="KW-0574">Periplasm</keyword>
<keyword id="KW-0645">Protease</keyword>
<keyword id="KW-0964">Secreted</keyword>
<keyword id="KW-0732">Signal</keyword>
<keyword id="KW-0862">Zinc</keyword>
<keyword id="KW-0865">Zymogen</keyword>
<sequence length="638" mass="69833">MSLATRRFGAAAALLVAACVLCTAPAWAQNETTGTGMVKTKSAFRWIRPPPARPPPFRRPPPAQTPYVHKVEYTELQILCPQTIDSVTGYPMDDPRCNVPRATVAAGEEALTIRNEFELLNGDVLNVTLEEVDTPENPSRRRLLSIIREEQRTGRVLLATSAELPTPTFRLKSLKSILKGSQKEIYAGKPIDLRTIVYIMDFSSCKLSGWSAPATLTPEKVTSDMLRGASAPTNNLANYYGACSYEKTLFNPDNFLVLGPVPVPCIGGVTPPPRPPRPPRPPPRAGSTISSLSRRNDTYDDWWDLSKYCTASEQQAWERAAEAYAQAIVAQDPNSATGKKLQGILQWRERRRNIYILPPGVKCSWSGYADVTCTSATCSAYVRGYSDTNAMQVIMHEAMHNYGLEHAGRGTLEYGDATDVMGDFNKAGKGLLCPNAPNMYRIGWAKPINEPGVAPFQNATGAWGNLTAANFTTDPWIRGLVIPAQGTRDDNMIVVNVGAQSTRDGAMKATGAQAYYFSYRIKNTTAGGYDSGLTLDFHKKVLVHAYNGIQSERVFGFKSNLLDWGPNFQSRSNTWTSPFLAYNNGLGGGVRLVVQSTSDTQAVVDICRISENGKELSCDDGIDNDCDGLQDNEDPDCQ</sequence>
<reference key="1">
    <citation type="journal article" date="1992" name="Proc. Natl. Acad. Sci. U.S.A.">
        <title>Primary structure and expression of a gamete lytic enzyme in Chlamydomonas reinhardtii: similarity of functional domains to matrix metalloproteases.</title>
        <authorList>
            <person name="Kinoshita T."/>
            <person name="Fukuzawa H."/>
            <person name="Shimada T."/>
            <person name="Saito T."/>
            <person name="Matsuda Y."/>
        </authorList>
    </citation>
    <scope>NUCLEOTIDE SEQUENCE [MRNA]</scope>
    <scope>PROTEIN SEQUENCE OF 184-203</scope>
</reference>
<organism>
    <name type="scientific">Chlamydomonas reinhardtii</name>
    <name type="common">Chlamydomonas smithii</name>
    <dbReference type="NCBI Taxonomy" id="3055"/>
    <lineage>
        <taxon>Eukaryota</taxon>
        <taxon>Viridiplantae</taxon>
        <taxon>Chlorophyta</taxon>
        <taxon>core chlorophytes</taxon>
        <taxon>Chlorophyceae</taxon>
        <taxon>CS clade</taxon>
        <taxon>Chlamydomonadales</taxon>
        <taxon>Chlamydomonadaceae</taxon>
        <taxon>Chlamydomonas</taxon>
    </lineage>
</organism>
<evidence type="ECO:0000250" key="1"/>
<evidence type="ECO:0000255" key="2"/>
<evidence type="ECO:0000256" key="3">
    <source>
        <dbReference type="SAM" id="MobiDB-lite"/>
    </source>
</evidence>
<evidence type="ECO:0000269" key="4">
    <source>
    </source>
</evidence>
<evidence type="ECO:0000305" key="5"/>
<comment type="function">
    <text>Mediates digestion of the cell walls of the 2 mating type gametes during mating as a necessary prelude to cell fusion. This enzyme acts specifically on the framework proteins (inner wall) of the cell wall, cleaving several model peptides at specific sites.</text>
</comment>
<comment type="catalytic activity">
    <reaction>
        <text>Cleavage of the proline- and hydroxyproline-rich proteins of the Chlamydomonas cell wall. Also cleaves azocasein, gelatin and Leu-Trp-Met-|-Arg-Phe-Ala.</text>
        <dbReference type="EC" id="3.4.24.38"/>
    </reaction>
</comment>
<comment type="cofactor">
    <cofactor evidence="1">
        <name>Zn(2+)</name>
        <dbReference type="ChEBI" id="CHEBI:29105"/>
    </cofactor>
    <text evidence="1">Binds 1 zinc ion per subunit.</text>
</comment>
<comment type="subcellular location">
    <subcellularLocation>
        <location>Periplasm</location>
    </subcellularLocation>
    <subcellularLocation>
        <location>Secreted</location>
        <location>Cell wall</location>
    </subcellularLocation>
    <text>Stored in the periplasm of gametes until its release. Secreted concurrently with release of the cell walls.</text>
</comment>
<comment type="induction">
    <text>By the signal of flagellar agglutination between gametes of the opposite mating type.</text>
</comment>
<comment type="domain">
    <text>The conserved cysteine present in the cysteine-switch motif binds the catalytic zinc ion, thus inhibiting the enzyme. The dissociation of the cysteine from the zinc ion upon the activation-peptide release activates the enzyme.</text>
</comment>
<comment type="PTM">
    <text>Present in 2 forms: an inactive V-form in vegetative cells and an active and soluble G-form. The V-form enzyme may be converted to the G-form enzyme during gametic differentiation under nitrogen-starved conditions.</text>
</comment>
<comment type="similarity">
    <text evidence="5">Belongs to the peptidase M11 family.</text>
</comment>
<proteinExistence type="evidence at protein level"/>
<protein>
    <recommendedName>
        <fullName>Autolysin</fullName>
        <ecNumber>3.4.24.38</ecNumber>
    </recommendedName>
    <alternativeName>
        <fullName>Gamete lytic enzyme</fullName>
        <shortName>GLE</shortName>
    </alternativeName>
    <alternativeName>
        <fullName>Gametolysin</fullName>
    </alternativeName>
</protein>
<name>GLE_CHLRE</name>